<name>M3KSL_DROME</name>
<dbReference type="EC" id="2.7.11.25"/>
<dbReference type="EMBL" id="AY045717">
    <property type="protein sequence ID" value="AAK98795.1"/>
    <property type="molecule type" value="mRNA"/>
</dbReference>
<dbReference type="EMBL" id="AE014298">
    <property type="protein sequence ID" value="AAF46344.3"/>
    <property type="status" value="ALT_SEQ"/>
    <property type="molecule type" value="Genomic_DNA"/>
</dbReference>
<dbReference type="EMBL" id="AY119549">
    <property type="protein sequence ID" value="AAM50203.1"/>
    <property type="molecule type" value="mRNA"/>
</dbReference>
<dbReference type="EMBL" id="AF416233">
    <property type="protein sequence ID" value="AAL08011.1"/>
    <property type="molecule type" value="mRNA"/>
</dbReference>
<dbReference type="RefSeq" id="NP_001188559.1">
    <property type="nucleotide sequence ID" value="NM_001201630.2"/>
</dbReference>
<dbReference type="RefSeq" id="NP_001188560.1">
    <property type="nucleotide sequence ID" value="NM_001201631.2"/>
</dbReference>
<dbReference type="RefSeq" id="NP_572458.3">
    <property type="nucleotide sequence ID" value="NM_132230.4"/>
</dbReference>
<dbReference type="SMR" id="Q95UN8"/>
<dbReference type="BioGRID" id="68838">
    <property type="interactions" value="15"/>
</dbReference>
<dbReference type="FunCoup" id="Q95UN8">
    <property type="interactions" value="93"/>
</dbReference>
<dbReference type="IntAct" id="Q95UN8">
    <property type="interactions" value="1"/>
</dbReference>
<dbReference type="STRING" id="7227.FBpp0292850"/>
<dbReference type="GlyGen" id="Q95UN8">
    <property type="glycosylation" value="1 site"/>
</dbReference>
<dbReference type="iPTMnet" id="Q95UN8"/>
<dbReference type="PaxDb" id="7227-FBpp0292850"/>
<dbReference type="GeneID" id="44111"/>
<dbReference type="KEGG" id="dme:Dmel_CG2272"/>
<dbReference type="AGR" id="FB:FBgn0030018"/>
<dbReference type="CTD" id="44111"/>
<dbReference type="FlyBase" id="FBgn0030018">
    <property type="gene designation" value="slpr"/>
</dbReference>
<dbReference type="VEuPathDB" id="VectorBase:FBgn0030018"/>
<dbReference type="eggNOG" id="KOG0192">
    <property type="taxonomic scope" value="Eukaryota"/>
</dbReference>
<dbReference type="InParanoid" id="Q95UN8"/>
<dbReference type="OrthoDB" id="339325at2759"/>
<dbReference type="Reactome" id="R-DME-5673000">
    <property type="pathway name" value="RAF activation"/>
</dbReference>
<dbReference type="Reactome" id="R-DME-5689880">
    <property type="pathway name" value="Ub-specific processing proteases"/>
</dbReference>
<dbReference type="Reactome" id="R-DME-5689896">
    <property type="pathway name" value="Ovarian tumor domain proteases"/>
</dbReference>
<dbReference type="Reactome" id="R-DME-9013408">
    <property type="pathway name" value="RHOG GTPase cycle"/>
</dbReference>
<dbReference type="Reactome" id="R-DME-9013424">
    <property type="pathway name" value="RHOV GTPase cycle"/>
</dbReference>
<dbReference type="SignaLink" id="Q95UN8"/>
<dbReference type="BioGRID-ORCS" id="44111">
    <property type="hits" value="0 hits in 3 CRISPR screens"/>
</dbReference>
<dbReference type="GenomeRNAi" id="44111"/>
<dbReference type="PRO" id="PR:Q95UN8"/>
<dbReference type="Proteomes" id="UP000000803">
    <property type="component" value="Chromosome X"/>
</dbReference>
<dbReference type="ExpressionAtlas" id="Q95UN8">
    <property type="expression patterns" value="baseline and differential"/>
</dbReference>
<dbReference type="GO" id="GO:0005938">
    <property type="term" value="C:cell cortex"/>
    <property type="evidence" value="ECO:0000314"/>
    <property type="project" value="FlyBase"/>
</dbReference>
<dbReference type="GO" id="GO:0005737">
    <property type="term" value="C:cytoplasm"/>
    <property type="evidence" value="ECO:0000318"/>
    <property type="project" value="GO_Central"/>
</dbReference>
<dbReference type="GO" id="GO:0005524">
    <property type="term" value="F:ATP binding"/>
    <property type="evidence" value="ECO:0007669"/>
    <property type="project" value="UniProtKB-KW"/>
</dbReference>
<dbReference type="GO" id="GO:0004706">
    <property type="term" value="F:JUN kinase kinase kinase activity"/>
    <property type="evidence" value="ECO:0000314"/>
    <property type="project" value="UniProtKB"/>
</dbReference>
<dbReference type="GO" id="GO:0004709">
    <property type="term" value="F:MAP kinase kinase kinase activity"/>
    <property type="evidence" value="ECO:0000314"/>
    <property type="project" value="FlyBase"/>
</dbReference>
<dbReference type="GO" id="GO:0042803">
    <property type="term" value="F:protein homodimerization activity"/>
    <property type="evidence" value="ECO:0000250"/>
    <property type="project" value="UniProtKB"/>
</dbReference>
<dbReference type="GO" id="GO:0106310">
    <property type="term" value="F:protein serine kinase activity"/>
    <property type="evidence" value="ECO:0007669"/>
    <property type="project" value="RHEA"/>
</dbReference>
<dbReference type="GO" id="GO:0071361">
    <property type="term" value="P:cellular response to ethanol"/>
    <property type="evidence" value="ECO:0000315"/>
    <property type="project" value="FlyBase"/>
</dbReference>
<dbReference type="GO" id="GO:0046843">
    <property type="term" value="P:dorsal appendage formation"/>
    <property type="evidence" value="ECO:0000315"/>
    <property type="project" value="FlyBase"/>
</dbReference>
<dbReference type="GO" id="GO:0007391">
    <property type="term" value="P:dorsal closure"/>
    <property type="evidence" value="ECO:0000315"/>
    <property type="project" value="FlyBase"/>
</dbReference>
<dbReference type="GO" id="GO:0007394">
    <property type="term" value="P:dorsal closure, elongation of leading edge cells"/>
    <property type="evidence" value="ECO:0000315"/>
    <property type="project" value="FlyBase"/>
</dbReference>
<dbReference type="GO" id="GO:0046529">
    <property type="term" value="P:imaginal disc fusion, thorax closure"/>
    <property type="evidence" value="ECO:0000315"/>
    <property type="project" value="FlyBase"/>
</dbReference>
<dbReference type="GO" id="GO:0048804">
    <property type="term" value="P:imaginal disc-derived female genitalia morphogenesis"/>
    <property type="evidence" value="ECO:0000315"/>
    <property type="project" value="FlyBase"/>
</dbReference>
<dbReference type="GO" id="GO:0048803">
    <property type="term" value="P:imaginal disc-derived male genitalia morphogenesis"/>
    <property type="evidence" value="ECO:0000315"/>
    <property type="project" value="FlyBase"/>
</dbReference>
<dbReference type="GO" id="GO:0007254">
    <property type="term" value="P:JNK cascade"/>
    <property type="evidence" value="ECO:0000315"/>
    <property type="project" value="UniProtKB"/>
</dbReference>
<dbReference type="GO" id="GO:0046330">
    <property type="term" value="P:positive regulation of JNK cascade"/>
    <property type="evidence" value="ECO:0000315"/>
    <property type="project" value="FlyBase"/>
</dbReference>
<dbReference type="GO" id="GO:0046777">
    <property type="term" value="P:protein autophosphorylation"/>
    <property type="evidence" value="ECO:0000250"/>
    <property type="project" value="UniProtKB"/>
</dbReference>
<dbReference type="GO" id="GO:0006468">
    <property type="term" value="P:protein phosphorylation"/>
    <property type="evidence" value="ECO:0000314"/>
    <property type="project" value="UniProtKB"/>
</dbReference>
<dbReference type="GO" id="GO:0009408">
    <property type="term" value="P:response to heat"/>
    <property type="evidence" value="ECO:0000315"/>
    <property type="project" value="FlyBase"/>
</dbReference>
<dbReference type="GO" id="GO:0007165">
    <property type="term" value="P:signal transduction"/>
    <property type="evidence" value="ECO:0000318"/>
    <property type="project" value="GO_Central"/>
</dbReference>
<dbReference type="GO" id="GO:0048010">
    <property type="term" value="P:vascular endothelial growth factor receptor signaling pathway"/>
    <property type="evidence" value="ECO:0000316"/>
    <property type="project" value="FlyBase"/>
</dbReference>
<dbReference type="CDD" id="cd11876">
    <property type="entry name" value="SH3_MLK"/>
    <property type="match status" value="1"/>
</dbReference>
<dbReference type="CDD" id="cd14061">
    <property type="entry name" value="STKc_MLK"/>
    <property type="match status" value="1"/>
</dbReference>
<dbReference type="FunFam" id="1.10.510.10:FF:000076">
    <property type="entry name" value="Mitogen-activated protein kinase kinase kinase"/>
    <property type="match status" value="1"/>
</dbReference>
<dbReference type="Gene3D" id="3.30.200.20">
    <property type="entry name" value="Phosphorylase Kinase, domain 1"/>
    <property type="match status" value="1"/>
</dbReference>
<dbReference type="Gene3D" id="2.30.30.40">
    <property type="entry name" value="SH3 Domains"/>
    <property type="match status" value="1"/>
</dbReference>
<dbReference type="Gene3D" id="1.10.510.10">
    <property type="entry name" value="Transferase(Phosphotransferase) domain 1"/>
    <property type="match status" value="1"/>
</dbReference>
<dbReference type="InterPro" id="IPR011009">
    <property type="entry name" value="Kinase-like_dom_sf"/>
</dbReference>
<dbReference type="InterPro" id="IPR000719">
    <property type="entry name" value="Prot_kinase_dom"/>
</dbReference>
<dbReference type="InterPro" id="IPR001245">
    <property type="entry name" value="Ser-Thr/Tyr_kinase_cat_dom"/>
</dbReference>
<dbReference type="InterPro" id="IPR008271">
    <property type="entry name" value="Ser/Thr_kinase_AS"/>
</dbReference>
<dbReference type="InterPro" id="IPR051681">
    <property type="entry name" value="Ser/Thr_Kinases-Pseudokinases"/>
</dbReference>
<dbReference type="InterPro" id="IPR036028">
    <property type="entry name" value="SH3-like_dom_sf"/>
</dbReference>
<dbReference type="InterPro" id="IPR001452">
    <property type="entry name" value="SH3_domain"/>
</dbReference>
<dbReference type="PANTHER" id="PTHR44329:SF293">
    <property type="entry name" value="MITOGEN-ACTIVATED PROTEIN KINASE KINASE KINASE"/>
    <property type="match status" value="1"/>
</dbReference>
<dbReference type="PANTHER" id="PTHR44329">
    <property type="entry name" value="SERINE/THREONINE-PROTEIN KINASE TNNI3K-RELATED"/>
    <property type="match status" value="1"/>
</dbReference>
<dbReference type="Pfam" id="PF07714">
    <property type="entry name" value="PK_Tyr_Ser-Thr"/>
    <property type="match status" value="1"/>
</dbReference>
<dbReference type="Pfam" id="PF00018">
    <property type="entry name" value="SH3_1"/>
    <property type="match status" value="1"/>
</dbReference>
<dbReference type="PRINTS" id="PR00452">
    <property type="entry name" value="SH3DOMAIN"/>
</dbReference>
<dbReference type="PRINTS" id="PR00109">
    <property type="entry name" value="TYRKINASE"/>
</dbReference>
<dbReference type="SMART" id="SM00220">
    <property type="entry name" value="S_TKc"/>
    <property type="match status" value="1"/>
</dbReference>
<dbReference type="SMART" id="SM00326">
    <property type="entry name" value="SH3"/>
    <property type="match status" value="1"/>
</dbReference>
<dbReference type="SUPFAM" id="SSF56112">
    <property type="entry name" value="Protein kinase-like (PK-like)"/>
    <property type="match status" value="1"/>
</dbReference>
<dbReference type="SUPFAM" id="SSF50044">
    <property type="entry name" value="SH3-domain"/>
    <property type="match status" value="1"/>
</dbReference>
<dbReference type="PROSITE" id="PS50011">
    <property type="entry name" value="PROTEIN_KINASE_DOM"/>
    <property type="match status" value="1"/>
</dbReference>
<dbReference type="PROSITE" id="PS00108">
    <property type="entry name" value="PROTEIN_KINASE_ST"/>
    <property type="match status" value="1"/>
</dbReference>
<dbReference type="PROSITE" id="PS50002">
    <property type="entry name" value="SH3"/>
    <property type="match status" value="1"/>
</dbReference>
<keyword id="KW-0067">ATP-binding</keyword>
<keyword id="KW-0217">Developmental protein</keyword>
<keyword id="KW-0418">Kinase</keyword>
<keyword id="KW-0547">Nucleotide-binding</keyword>
<keyword id="KW-0597">Phosphoprotein</keyword>
<keyword id="KW-1185">Reference proteome</keyword>
<keyword id="KW-0677">Repeat</keyword>
<keyword id="KW-0723">Serine/threonine-protein kinase</keyword>
<keyword id="KW-0728">SH3 domain</keyword>
<keyword id="KW-0808">Transferase</keyword>
<accession>Q95UN8</accession>
<accession>Q8MRK7</accession>
<accession>Q95VF6</accession>
<accession>Q9W3I3</accession>
<evidence type="ECO:0000250" key="1"/>
<evidence type="ECO:0000250" key="2">
    <source>
        <dbReference type="UniProtKB" id="P80192"/>
    </source>
</evidence>
<evidence type="ECO:0000250" key="3">
    <source>
        <dbReference type="UniProtKB" id="Q02779"/>
    </source>
</evidence>
<evidence type="ECO:0000250" key="4">
    <source>
        <dbReference type="UniProtKB" id="Q16584"/>
    </source>
</evidence>
<evidence type="ECO:0000255" key="5">
    <source>
        <dbReference type="PROSITE-ProRule" id="PRU00159"/>
    </source>
</evidence>
<evidence type="ECO:0000255" key="6">
    <source>
        <dbReference type="PROSITE-ProRule" id="PRU00192"/>
    </source>
</evidence>
<evidence type="ECO:0000255" key="7">
    <source>
        <dbReference type="PROSITE-ProRule" id="PRU10027"/>
    </source>
</evidence>
<evidence type="ECO:0000256" key="8">
    <source>
        <dbReference type="SAM" id="MobiDB-lite"/>
    </source>
</evidence>
<evidence type="ECO:0000269" key="9">
    <source>
    </source>
</evidence>
<evidence type="ECO:0000269" key="10">
    <source>
    </source>
</evidence>
<evidence type="ECO:0000269" key="11">
    <source>
    </source>
</evidence>
<evidence type="ECO:0000269" key="12">
    <source>
    </source>
</evidence>
<evidence type="ECO:0000269" key="13">
    <source>
    </source>
</evidence>
<evidence type="ECO:0000269" key="14">
    <source>
    </source>
</evidence>
<evidence type="ECO:0000305" key="15"/>
<evidence type="ECO:0000312" key="16">
    <source>
        <dbReference type="EMBL" id="AAK98795.1"/>
    </source>
</evidence>
<evidence type="ECO:0000312" key="17">
    <source>
        <dbReference type="EMBL" id="AAL08011.1"/>
    </source>
</evidence>
<evidence type="ECO:0000312" key="18">
    <source>
        <dbReference type="EMBL" id="AAM50203.1"/>
    </source>
</evidence>
<evidence type="ECO:0000312" key="19">
    <source>
        <dbReference type="FlyBase" id="FBgn0030018"/>
    </source>
</evidence>
<comment type="function">
    <text evidence="10 11 13">Activates the JUN N-terminal pathway during dorsal closure.</text>
</comment>
<comment type="catalytic activity">
    <reaction evidence="13">
        <text>L-seryl-[protein] + ATP = O-phospho-L-seryl-[protein] + ADP + H(+)</text>
        <dbReference type="Rhea" id="RHEA:17989"/>
        <dbReference type="Rhea" id="RHEA-COMP:9863"/>
        <dbReference type="Rhea" id="RHEA-COMP:11604"/>
        <dbReference type="ChEBI" id="CHEBI:15378"/>
        <dbReference type="ChEBI" id="CHEBI:29999"/>
        <dbReference type="ChEBI" id="CHEBI:30616"/>
        <dbReference type="ChEBI" id="CHEBI:83421"/>
        <dbReference type="ChEBI" id="CHEBI:456216"/>
        <dbReference type="EC" id="2.7.11.25"/>
    </reaction>
</comment>
<comment type="catalytic activity">
    <reaction evidence="13">
        <text>L-threonyl-[protein] + ATP = O-phospho-L-threonyl-[protein] + ADP + H(+)</text>
        <dbReference type="Rhea" id="RHEA:46608"/>
        <dbReference type="Rhea" id="RHEA-COMP:11060"/>
        <dbReference type="Rhea" id="RHEA-COMP:11605"/>
        <dbReference type="ChEBI" id="CHEBI:15378"/>
        <dbReference type="ChEBI" id="CHEBI:30013"/>
        <dbReference type="ChEBI" id="CHEBI:30616"/>
        <dbReference type="ChEBI" id="CHEBI:61977"/>
        <dbReference type="ChEBI" id="CHEBI:456216"/>
        <dbReference type="EC" id="2.7.11.25"/>
    </reaction>
</comment>
<comment type="cofactor">
    <cofactor evidence="2">
        <name>Mg(2+)</name>
        <dbReference type="ChEBI" id="CHEBI:18420"/>
    </cofactor>
</comment>
<comment type="activity regulation">
    <text evidence="4 11">Homodimerization via the leucine zipper domains is required for autophosphorylation and subsequent activation (By similarity). Activated by C6-ceramide.</text>
</comment>
<comment type="subunit">
    <text evidence="4">Homodimer.</text>
</comment>
<comment type="tissue specificity">
    <text evidence="13">Expressed both maternally and zygotically. Expressed uniformly in large quantities in the early embryo (stages 1-4). In the late embryo, expression is ubiquitous, but expression levels are dramatically reduced. Expressed in the adult head and thorax, and in S2 cells.</text>
</comment>
<comment type="PTM">
    <text evidence="4">Autophosphorylation on serine and threonine residues within the activation loop plays a role in enzyme activation.</text>
</comment>
<comment type="disruption phenotype">
    <text evidence="10">Mutants display defects in dorsal closure, resulting in a cuticle that resembles an open shoe. Therefore the protein was given the name Slipper.</text>
</comment>
<comment type="similarity">
    <text evidence="15">Belongs to the protein kinase superfamily. STE Ser/Thr protein kinase family. MAP kinase kinase kinase subfamily.</text>
</comment>
<comment type="sequence caution" evidence="15">
    <conflict type="erroneous gene model prediction">
        <sequence resource="EMBL-CDS" id="AAF46344"/>
    </conflict>
</comment>
<reference evidence="15 16" key="1">
    <citation type="journal article" date="2002" name="Genes Dev.">
        <title>Activation of the JNK pathway during dorsal closure in Drosophila requires the mixed lineage kinase, slipper.</title>
        <authorList>
            <person name="Stronach B."/>
            <person name="Perrimon N."/>
        </authorList>
    </citation>
    <scope>NUCLEOTIDE SEQUENCE [MRNA]</scope>
    <scope>FUNCTION</scope>
    <scope>DISRUPTION PHENOTYPE</scope>
    <source>
        <strain evidence="10">Berkeley</strain>
        <tissue evidence="16">Head</tissue>
    </source>
</reference>
<reference key="2">
    <citation type="journal article" date="2000" name="Science">
        <title>The genome sequence of Drosophila melanogaster.</title>
        <authorList>
            <person name="Adams M.D."/>
            <person name="Celniker S.E."/>
            <person name="Holt R.A."/>
            <person name="Evans C.A."/>
            <person name="Gocayne J.D."/>
            <person name="Amanatides P.G."/>
            <person name="Scherer S.E."/>
            <person name="Li P.W."/>
            <person name="Hoskins R.A."/>
            <person name="Galle R.F."/>
            <person name="George R.A."/>
            <person name="Lewis S.E."/>
            <person name="Richards S."/>
            <person name="Ashburner M."/>
            <person name="Henderson S.N."/>
            <person name="Sutton G.G."/>
            <person name="Wortman J.R."/>
            <person name="Yandell M.D."/>
            <person name="Zhang Q."/>
            <person name="Chen L.X."/>
            <person name="Brandon R.C."/>
            <person name="Rogers Y.-H.C."/>
            <person name="Blazej R.G."/>
            <person name="Champe M."/>
            <person name="Pfeiffer B.D."/>
            <person name="Wan K.H."/>
            <person name="Doyle C."/>
            <person name="Baxter E.G."/>
            <person name="Helt G."/>
            <person name="Nelson C.R."/>
            <person name="Miklos G.L.G."/>
            <person name="Abril J.F."/>
            <person name="Agbayani A."/>
            <person name="An H.-J."/>
            <person name="Andrews-Pfannkoch C."/>
            <person name="Baldwin D."/>
            <person name="Ballew R.M."/>
            <person name="Basu A."/>
            <person name="Baxendale J."/>
            <person name="Bayraktaroglu L."/>
            <person name="Beasley E.M."/>
            <person name="Beeson K.Y."/>
            <person name="Benos P.V."/>
            <person name="Berman B.P."/>
            <person name="Bhandari D."/>
            <person name="Bolshakov S."/>
            <person name="Borkova D."/>
            <person name="Botchan M.R."/>
            <person name="Bouck J."/>
            <person name="Brokstein P."/>
            <person name="Brottier P."/>
            <person name="Burtis K.C."/>
            <person name="Busam D.A."/>
            <person name="Butler H."/>
            <person name="Cadieu E."/>
            <person name="Center A."/>
            <person name="Chandra I."/>
            <person name="Cherry J.M."/>
            <person name="Cawley S."/>
            <person name="Dahlke C."/>
            <person name="Davenport L.B."/>
            <person name="Davies P."/>
            <person name="de Pablos B."/>
            <person name="Delcher A."/>
            <person name="Deng Z."/>
            <person name="Mays A.D."/>
            <person name="Dew I."/>
            <person name="Dietz S.M."/>
            <person name="Dodson K."/>
            <person name="Doup L.E."/>
            <person name="Downes M."/>
            <person name="Dugan-Rocha S."/>
            <person name="Dunkov B.C."/>
            <person name="Dunn P."/>
            <person name="Durbin K.J."/>
            <person name="Evangelista C.C."/>
            <person name="Ferraz C."/>
            <person name="Ferriera S."/>
            <person name="Fleischmann W."/>
            <person name="Fosler C."/>
            <person name="Gabrielian A.E."/>
            <person name="Garg N.S."/>
            <person name="Gelbart W.M."/>
            <person name="Glasser K."/>
            <person name="Glodek A."/>
            <person name="Gong F."/>
            <person name="Gorrell J.H."/>
            <person name="Gu Z."/>
            <person name="Guan P."/>
            <person name="Harris M."/>
            <person name="Harris N.L."/>
            <person name="Harvey D.A."/>
            <person name="Heiman T.J."/>
            <person name="Hernandez J.R."/>
            <person name="Houck J."/>
            <person name="Hostin D."/>
            <person name="Houston K.A."/>
            <person name="Howland T.J."/>
            <person name="Wei M.-H."/>
            <person name="Ibegwam C."/>
            <person name="Jalali M."/>
            <person name="Kalush F."/>
            <person name="Karpen G.H."/>
            <person name="Ke Z."/>
            <person name="Kennison J.A."/>
            <person name="Ketchum K.A."/>
            <person name="Kimmel B.E."/>
            <person name="Kodira C.D."/>
            <person name="Kraft C.L."/>
            <person name="Kravitz S."/>
            <person name="Kulp D."/>
            <person name="Lai Z."/>
            <person name="Lasko P."/>
            <person name="Lei Y."/>
            <person name="Levitsky A.A."/>
            <person name="Li J.H."/>
            <person name="Li Z."/>
            <person name="Liang Y."/>
            <person name="Lin X."/>
            <person name="Liu X."/>
            <person name="Mattei B."/>
            <person name="McIntosh T.C."/>
            <person name="McLeod M.P."/>
            <person name="McPherson D."/>
            <person name="Merkulov G."/>
            <person name="Milshina N.V."/>
            <person name="Mobarry C."/>
            <person name="Morris J."/>
            <person name="Moshrefi A."/>
            <person name="Mount S.M."/>
            <person name="Moy M."/>
            <person name="Murphy B."/>
            <person name="Murphy L."/>
            <person name="Muzny D.M."/>
            <person name="Nelson D.L."/>
            <person name="Nelson D.R."/>
            <person name="Nelson K.A."/>
            <person name="Nixon K."/>
            <person name="Nusskern D.R."/>
            <person name="Pacleb J.M."/>
            <person name="Palazzolo M."/>
            <person name="Pittman G.S."/>
            <person name="Pan S."/>
            <person name="Pollard J."/>
            <person name="Puri V."/>
            <person name="Reese M.G."/>
            <person name="Reinert K."/>
            <person name="Remington K."/>
            <person name="Saunders R.D.C."/>
            <person name="Scheeler F."/>
            <person name="Shen H."/>
            <person name="Shue B.C."/>
            <person name="Siden-Kiamos I."/>
            <person name="Simpson M."/>
            <person name="Skupski M.P."/>
            <person name="Smith T.J."/>
            <person name="Spier E."/>
            <person name="Spradling A.C."/>
            <person name="Stapleton M."/>
            <person name="Strong R."/>
            <person name="Sun E."/>
            <person name="Svirskas R."/>
            <person name="Tector C."/>
            <person name="Turner R."/>
            <person name="Venter E."/>
            <person name="Wang A.H."/>
            <person name="Wang X."/>
            <person name="Wang Z.-Y."/>
            <person name="Wassarman D.A."/>
            <person name="Weinstock G.M."/>
            <person name="Weissenbach J."/>
            <person name="Williams S.M."/>
            <person name="Woodage T."/>
            <person name="Worley K.C."/>
            <person name="Wu D."/>
            <person name="Yang S."/>
            <person name="Yao Q.A."/>
            <person name="Ye J."/>
            <person name="Yeh R.-F."/>
            <person name="Zaveri J.S."/>
            <person name="Zhan M."/>
            <person name="Zhang G."/>
            <person name="Zhao Q."/>
            <person name="Zheng L."/>
            <person name="Zheng X.H."/>
            <person name="Zhong F.N."/>
            <person name="Zhong W."/>
            <person name="Zhou X."/>
            <person name="Zhu S.C."/>
            <person name="Zhu X."/>
            <person name="Smith H.O."/>
            <person name="Gibbs R.A."/>
            <person name="Myers E.W."/>
            <person name="Rubin G.M."/>
            <person name="Venter J.C."/>
        </authorList>
    </citation>
    <scope>NUCLEOTIDE SEQUENCE [LARGE SCALE GENOMIC DNA]</scope>
    <source>
        <strain evidence="9">Berkeley</strain>
    </source>
</reference>
<reference evidence="15" key="3">
    <citation type="journal article" date="2002" name="Genome Biol.">
        <title>Annotation of the Drosophila melanogaster euchromatic genome: a systematic review.</title>
        <authorList>
            <person name="Misra S."/>
            <person name="Crosby M.A."/>
            <person name="Mungall C.J."/>
            <person name="Matthews B.B."/>
            <person name="Campbell K.S."/>
            <person name="Hradecky P."/>
            <person name="Huang Y."/>
            <person name="Kaminker J.S."/>
            <person name="Millburn G.H."/>
            <person name="Prochnik S.E."/>
            <person name="Smith C.D."/>
            <person name="Tupy J.L."/>
            <person name="Whitfield E.J."/>
            <person name="Bayraktaroglu L."/>
            <person name="Berman B.P."/>
            <person name="Bettencourt B.R."/>
            <person name="Celniker S.E."/>
            <person name="de Grey A.D.N.J."/>
            <person name="Drysdale R.A."/>
            <person name="Harris N.L."/>
            <person name="Richter J."/>
            <person name="Russo S."/>
            <person name="Schroeder A.J."/>
            <person name="Shu S.Q."/>
            <person name="Stapleton M."/>
            <person name="Yamada C."/>
            <person name="Ashburner M."/>
            <person name="Gelbart W.M."/>
            <person name="Rubin G.M."/>
            <person name="Lewis S.E."/>
        </authorList>
    </citation>
    <scope>GENOME REANNOTATION</scope>
    <source>
        <strain>Berkeley</strain>
    </source>
</reference>
<reference evidence="15 18" key="4">
    <citation type="journal article" date="2002" name="Genome Biol.">
        <title>A Drosophila full-length cDNA resource.</title>
        <authorList>
            <person name="Stapleton M."/>
            <person name="Carlson J.W."/>
            <person name="Brokstein P."/>
            <person name="Yu C."/>
            <person name="Champe M."/>
            <person name="George R.A."/>
            <person name="Guarin H."/>
            <person name="Kronmiller B."/>
            <person name="Pacleb J.M."/>
            <person name="Park S."/>
            <person name="Wan K.H."/>
            <person name="Rubin G.M."/>
            <person name="Celniker S.E."/>
        </authorList>
    </citation>
    <scope>NUCLEOTIDE SEQUENCE [LARGE SCALE MRNA]</scope>
    <source>
        <strain evidence="18">Berkeley</strain>
        <tissue evidence="12">Head</tissue>
    </source>
</reference>
<reference evidence="15 17" key="5">
    <citation type="journal article" date="2003" name="Biochim. Biophys. Acta">
        <title>Drosophila mixed lineage kinase/slipper, a missing biochemical link in Drosophila JNK signaling.</title>
        <authorList>
            <person name="Sathyanarayana P."/>
            <person name="Barthwal M.K."/>
            <person name="Lane M.E."/>
            <person name="Acevedo S.F."/>
            <person name="Skoulakis E.M."/>
            <person name="Bergmann A."/>
            <person name="Rana A."/>
        </authorList>
    </citation>
    <scope>NUCLEOTIDE SEQUENCE [MRNA] OF 14-1161</scope>
    <scope>FUNCTION</scope>
    <scope>CATALYTIC ACTIVITY</scope>
    <scope>TISSUE SPECIFICITY</scope>
    <source>
        <strain evidence="13">Berkeley</strain>
        <tissue evidence="13">Embryo</tissue>
    </source>
</reference>
<reference evidence="15" key="6">
    <citation type="journal article" date="2002" name="Mol. Cell">
        <title>Activation of the Drosophila MLK by ceramide reveals TNF-alpha and ceramide as agonists of mammalian MLK3.</title>
        <authorList>
            <person name="Sathyanarayana P."/>
            <person name="Barthwal M.K."/>
            <person name="Kundu C.N."/>
            <person name="Lane M.E."/>
            <person name="Bergmann A."/>
            <person name="Tzivion G."/>
            <person name="Rana A."/>
        </authorList>
    </citation>
    <scope>FUNCTION</scope>
    <scope>ACTIVITY REGULATION</scope>
    <scope>MUTAGENESIS OF LYS-169</scope>
</reference>
<reference key="7">
    <citation type="journal article" date="2008" name="J. Proteome Res.">
        <title>Phosphoproteome analysis of Drosophila melanogaster embryos.</title>
        <authorList>
            <person name="Zhai B."/>
            <person name="Villen J."/>
            <person name="Beausoleil S.A."/>
            <person name="Mintseris J."/>
            <person name="Gygi S.P."/>
        </authorList>
    </citation>
    <scope>PHOSPHORYLATION [LARGE SCALE ANALYSIS] AT SER-525 AND THR-862</scope>
    <scope>IDENTIFICATION BY MASS SPECTROMETRY</scope>
    <source>
        <tissue>Embryo</tissue>
    </source>
</reference>
<sequence length="1161" mass="128961">MPSQVSRGLDTTNMLPISEEQQLQQQQQQQQLEQLHHPQIPEIPIPDLEQVETQVGDGSLWTALYDYDAQGEDELTLRRGEIVVVLSTDSEVSGDVGWWTGKIGDKVGVFPKDFVTDEDPLQLNVSSAIGDIQPHEIEYNELDIKEVIGSGGFCKVHRGYYDGEEVAIKIAHQTGEDDMQRMRDNVLQEAKLFWALKHENIAALRGVCLNTKLCLVMEYARGGSLNRILAGKIPPDVLVNWAIQIARGMNYLHNEAPMSIIHRDLKSSNVLIYEAIEGNHLQQKTLKITDFGLAREMYNTQRMSAAGTYAWMPPEVISVSTYSKFSDVWSYGVLLWELITGETPYKGFDPLSVAYGVAVNTLTLPIPKTCPETWGALMKSCWQTDPHKRPGFKEILKQLESIACSKFTLTPQESFHYMQECWRKEIAGVLHDLREKEKELRNKEEQLLRVQNEQREKANLLKIREQNLRERERVLIERELVMLQPVPSKRKHKKGKKNKPLQISLPTGFRHTITAVRDKAEQPGSPSFSGLRIVALTDGHKGKTWGPSTMHQRERSLLPSQLSGGQPEWPAQTSTHSSFSKSAPNLDKKQQQQNQQQVASLTPPPGLGILGGSGGAGGTPATPLLYPGIPIILTRPNNNNIGNCKAITTTITTTTTTTTNNNNNNNNSISANNNNQLNNISTINSNNNNNQTNLTSQPNTIIVLQNGRNNSNSSTTSQSPAKIYHRARSQEYGLDHPLAYQPPPLYLVTDDSSETDTVASPTGCFHFLKSGNSSAASGAVHLHRFGGSLGNSPAVGRKKHSLDSSSHHPPANGSNSFALPNQLTLPSEDNNTYDHAFYRDVIKKMSMASSERVNSKSSGDLTMYNSSTPLTARDCDDAEEAFEGGRFQRNFSGSQFPRHCFFTRQEEEGEAEDEDAVAAEVDTADADADDECQVPASQMRQNSTTSRKSSVTFQSVSFEEPDFVATPRTTARSDLYTSSASISFATYRSASPSLSSSSTTASASPSIASTEAVNGYHMQENSILNTRRMQDVQPHPDVIKLRAQEQRQQTKNQKKQRPKHITKSKSVEAPVEGQHHEHDDHNDPQHQHHSAGSSKIRALFNLFTRSRKKYSKLAEHNMVGGPEFCAIDPYQTDLAMGGSSRSLKRKGKKPQTQSCEQLERC</sequence>
<proteinExistence type="evidence at protein level"/>
<feature type="chain" id="PRO_0000086269" description="Mitogen-activated protein kinase kinase kinase">
    <location>
        <begin position="1"/>
        <end position="1161"/>
    </location>
</feature>
<feature type="domain" description="SH3" evidence="6">
    <location>
        <begin position="56"/>
        <end position="120"/>
    </location>
</feature>
<feature type="domain" description="Protein kinase" evidence="5">
    <location>
        <begin position="142"/>
        <end position="402"/>
    </location>
</feature>
<feature type="region of interest" description="Leucine-zipper 1">
    <location>
        <begin position="426"/>
        <end position="447"/>
    </location>
</feature>
<feature type="region of interest" description="Leucine-zipper 2">
    <location>
        <begin position="461"/>
        <end position="482"/>
    </location>
</feature>
<feature type="region of interest" description="Disordered" evidence="8">
    <location>
        <begin position="560"/>
        <end position="615"/>
    </location>
</feature>
<feature type="region of interest" description="Disordered" evidence="8">
    <location>
        <begin position="658"/>
        <end position="678"/>
    </location>
</feature>
<feature type="region of interest" description="Disordered" evidence="8">
    <location>
        <begin position="790"/>
        <end position="830"/>
    </location>
</feature>
<feature type="region of interest" description="Disordered" evidence="8">
    <location>
        <begin position="988"/>
        <end position="1014"/>
    </location>
</feature>
<feature type="region of interest" description="Disordered" evidence="8">
    <location>
        <begin position="1045"/>
        <end position="1093"/>
    </location>
</feature>
<feature type="region of interest" description="Disordered" evidence="8">
    <location>
        <begin position="1137"/>
        <end position="1161"/>
    </location>
</feature>
<feature type="compositionally biased region" description="Polar residues" evidence="8">
    <location>
        <begin position="571"/>
        <end position="583"/>
    </location>
</feature>
<feature type="compositionally biased region" description="Low complexity" evidence="8">
    <location>
        <begin position="591"/>
        <end position="601"/>
    </location>
</feature>
<feature type="compositionally biased region" description="Polar residues" evidence="8">
    <location>
        <begin position="812"/>
        <end position="830"/>
    </location>
</feature>
<feature type="compositionally biased region" description="Low complexity" evidence="8">
    <location>
        <begin position="989"/>
        <end position="1010"/>
    </location>
</feature>
<feature type="compositionally biased region" description="Basic residues" evidence="8">
    <location>
        <begin position="1052"/>
        <end position="1063"/>
    </location>
</feature>
<feature type="compositionally biased region" description="Basic and acidic residues" evidence="8">
    <location>
        <begin position="1073"/>
        <end position="1086"/>
    </location>
</feature>
<feature type="compositionally biased region" description="Polar residues" evidence="8">
    <location>
        <begin position="1150"/>
        <end position="1161"/>
    </location>
</feature>
<feature type="active site" description="Proton acceptor" evidence="3 5 7">
    <location>
        <position position="264"/>
    </location>
</feature>
<feature type="binding site" evidence="3 5">
    <location>
        <begin position="148"/>
        <end position="156"/>
    </location>
    <ligand>
        <name>ATP</name>
        <dbReference type="ChEBI" id="CHEBI:30616"/>
    </ligand>
</feature>
<feature type="binding site" evidence="5 11">
    <location>
        <position position="169"/>
    </location>
    <ligand>
        <name>ATP</name>
        <dbReference type="ChEBI" id="CHEBI:30616"/>
    </ligand>
</feature>
<feature type="modified residue" description="Phosphothreonine; by autocatalysis" evidence="1">
    <location>
        <position position="300"/>
    </location>
</feature>
<feature type="modified residue" description="Phosphoserine; by autocatalysis" evidence="1">
    <location>
        <position position="304"/>
    </location>
</feature>
<feature type="modified residue" description="Phosphoserine" evidence="14">
    <location>
        <position position="525"/>
    </location>
</feature>
<feature type="modified residue" description="Phosphoserine" evidence="4">
    <location>
        <position position="560"/>
    </location>
</feature>
<feature type="modified residue" description="Phosphoserine" evidence="4">
    <location>
        <position position="685"/>
    </location>
</feature>
<feature type="modified residue" description="Phosphoserine" evidence="4">
    <location>
        <position position="773"/>
    </location>
</feature>
<feature type="modified residue" description="Phosphoserine" evidence="4">
    <location>
        <position position="792"/>
    </location>
</feature>
<feature type="modified residue" description="Phosphothreonine" evidence="14">
    <location>
        <position position="862"/>
    </location>
</feature>
<feature type="modified residue" description="Phosphoserine" evidence="4">
    <location>
        <position position="993"/>
    </location>
</feature>
<feature type="mutagenesis site" description="Loss of kinase activity. Attenuates bsk activation." evidence="11">
    <original>K</original>
    <variation>A</variation>
    <location>
        <position position="169"/>
    </location>
</feature>
<feature type="sequence conflict" description="In Ref. 4; AAM50203." evidence="15" ref="4">
    <original>D</original>
    <variation>Y</variation>
    <location>
        <position position="327"/>
    </location>
</feature>
<feature type="sequence conflict" description="In Ref. 5; AAL08011." evidence="15" ref="5">
    <original>S</original>
    <variation>P</variation>
    <location>
        <position position="670"/>
    </location>
</feature>
<feature type="sequence conflict" description="In Ref. 5; AAL08011." evidence="15" ref="5">
    <original>E</original>
    <variation>G</variation>
    <location>
        <position position="908"/>
    </location>
</feature>
<gene>
    <name evidence="19" type="primary">slpr</name>
    <name evidence="18" type="synonym">Mlk2</name>
    <name type="ORF">CG2272</name>
</gene>
<organism>
    <name type="scientific">Drosophila melanogaster</name>
    <name type="common">Fruit fly</name>
    <dbReference type="NCBI Taxonomy" id="7227"/>
    <lineage>
        <taxon>Eukaryota</taxon>
        <taxon>Metazoa</taxon>
        <taxon>Ecdysozoa</taxon>
        <taxon>Arthropoda</taxon>
        <taxon>Hexapoda</taxon>
        <taxon>Insecta</taxon>
        <taxon>Pterygota</taxon>
        <taxon>Neoptera</taxon>
        <taxon>Endopterygota</taxon>
        <taxon>Diptera</taxon>
        <taxon>Brachycera</taxon>
        <taxon>Muscomorpha</taxon>
        <taxon>Ephydroidea</taxon>
        <taxon>Drosophilidae</taxon>
        <taxon>Drosophila</taxon>
        <taxon>Sophophora</taxon>
    </lineage>
</organism>
<protein>
    <recommendedName>
        <fullName>Mitogen-activated protein kinase kinase kinase</fullName>
        <ecNumber>2.7.11.25</ecNumber>
    </recommendedName>
    <alternativeName>
        <fullName>Mixed lineage kinase</fullName>
    </alternativeName>
    <alternativeName>
        <fullName>Protein slipper</fullName>
    </alternativeName>
    <alternativeName>
        <fullName>dMLK</fullName>
    </alternativeName>
</protein>